<name>TIG_CHLPD</name>
<sequence length="427" mass="48098">MQKNITKVSDTEQELEIILTAEEYGTEYNQELDEAKRTIQVKGFRKGHVPTGLIKKLAGPAIEASVAEKMASKHFGTIVDEEKIKPASRAQIESVSYEGDELKIKLSYEIHPVFELNNYSDYTFTKARYTITDEDVQKEIDLILKGHGSLATVDEAALGTDTVIGDVEKLDAAGEPEEGGKTENHHFNLEYLPEDNPFRISLEGAKAGETVNVATTQKDPNTPVVSYRITVKEVKRLELPELTDDLVKEITRQRFETVADFTADVRIQLEEHFGMKSDEELLESISSKLIEENPVSTPKSMVASFANMLVENAKRQFGGKFPKGFDESQFTESIIPNAEKHARWLLISQKIAELNNVEVTDEDIKTYAEKEAEKSTPEQKEEIMSTYQSTEFRDYIADTIIKDKIYDIIKSQVTITEEPTPVPVHKA</sequence>
<evidence type="ECO:0000255" key="1">
    <source>
        <dbReference type="HAMAP-Rule" id="MF_00303"/>
    </source>
</evidence>
<protein>
    <recommendedName>
        <fullName evidence="1">Trigger factor</fullName>
        <shortName evidence="1">TF</shortName>
        <ecNumber evidence="1">5.2.1.8</ecNumber>
    </recommendedName>
    <alternativeName>
        <fullName evidence="1">PPIase</fullName>
    </alternativeName>
</protein>
<dbReference type="EC" id="5.2.1.8" evidence="1"/>
<dbReference type="EMBL" id="CP000492">
    <property type="protein sequence ID" value="ABL66284.1"/>
    <property type="molecule type" value="Genomic_DNA"/>
</dbReference>
<dbReference type="RefSeq" id="WP_011746075.1">
    <property type="nucleotide sequence ID" value="NC_008639.1"/>
</dbReference>
<dbReference type="SMR" id="A1BIQ7"/>
<dbReference type="STRING" id="290317.Cpha266_2292"/>
<dbReference type="KEGG" id="cph:Cpha266_2292"/>
<dbReference type="eggNOG" id="COG0544">
    <property type="taxonomic scope" value="Bacteria"/>
</dbReference>
<dbReference type="HOGENOM" id="CLU_033058_3_1_10"/>
<dbReference type="OrthoDB" id="9767721at2"/>
<dbReference type="Proteomes" id="UP000008701">
    <property type="component" value="Chromosome"/>
</dbReference>
<dbReference type="GO" id="GO:0005737">
    <property type="term" value="C:cytoplasm"/>
    <property type="evidence" value="ECO:0007669"/>
    <property type="project" value="UniProtKB-SubCell"/>
</dbReference>
<dbReference type="GO" id="GO:0003755">
    <property type="term" value="F:peptidyl-prolyl cis-trans isomerase activity"/>
    <property type="evidence" value="ECO:0007669"/>
    <property type="project" value="UniProtKB-UniRule"/>
</dbReference>
<dbReference type="GO" id="GO:0051301">
    <property type="term" value="P:cell division"/>
    <property type="evidence" value="ECO:0007669"/>
    <property type="project" value="UniProtKB-KW"/>
</dbReference>
<dbReference type="GO" id="GO:0006457">
    <property type="term" value="P:protein folding"/>
    <property type="evidence" value="ECO:0007669"/>
    <property type="project" value="UniProtKB-UniRule"/>
</dbReference>
<dbReference type="GO" id="GO:0015031">
    <property type="term" value="P:protein transport"/>
    <property type="evidence" value="ECO:0007669"/>
    <property type="project" value="UniProtKB-UniRule"/>
</dbReference>
<dbReference type="Gene3D" id="3.10.50.40">
    <property type="match status" value="1"/>
</dbReference>
<dbReference type="Gene3D" id="3.30.70.1050">
    <property type="entry name" value="Trigger factor ribosome-binding domain"/>
    <property type="match status" value="1"/>
</dbReference>
<dbReference type="Gene3D" id="1.10.3120.10">
    <property type="entry name" value="Trigger factor, C-terminal domain"/>
    <property type="match status" value="1"/>
</dbReference>
<dbReference type="HAMAP" id="MF_00303">
    <property type="entry name" value="Trigger_factor_Tig"/>
    <property type="match status" value="1"/>
</dbReference>
<dbReference type="InterPro" id="IPR046357">
    <property type="entry name" value="PPIase_dom_sf"/>
</dbReference>
<dbReference type="InterPro" id="IPR005215">
    <property type="entry name" value="Trig_fac"/>
</dbReference>
<dbReference type="InterPro" id="IPR008880">
    <property type="entry name" value="Trigger_fac_C"/>
</dbReference>
<dbReference type="InterPro" id="IPR037041">
    <property type="entry name" value="Trigger_fac_C_sf"/>
</dbReference>
<dbReference type="InterPro" id="IPR008881">
    <property type="entry name" value="Trigger_fac_ribosome-bd_bac"/>
</dbReference>
<dbReference type="InterPro" id="IPR036611">
    <property type="entry name" value="Trigger_fac_ribosome-bd_sf"/>
</dbReference>
<dbReference type="InterPro" id="IPR027304">
    <property type="entry name" value="Trigger_fact/SurA_dom_sf"/>
</dbReference>
<dbReference type="NCBIfam" id="TIGR00115">
    <property type="entry name" value="tig"/>
    <property type="match status" value="1"/>
</dbReference>
<dbReference type="Pfam" id="PF05698">
    <property type="entry name" value="Trigger_C"/>
    <property type="match status" value="1"/>
</dbReference>
<dbReference type="Pfam" id="PF05697">
    <property type="entry name" value="Trigger_N"/>
    <property type="match status" value="1"/>
</dbReference>
<dbReference type="PIRSF" id="PIRSF003095">
    <property type="entry name" value="Trigger_factor"/>
    <property type="match status" value="1"/>
</dbReference>
<dbReference type="SUPFAM" id="SSF54534">
    <property type="entry name" value="FKBP-like"/>
    <property type="match status" value="1"/>
</dbReference>
<dbReference type="SUPFAM" id="SSF109998">
    <property type="entry name" value="Triger factor/SurA peptide-binding domain-like"/>
    <property type="match status" value="1"/>
</dbReference>
<dbReference type="SUPFAM" id="SSF102735">
    <property type="entry name" value="Trigger factor ribosome-binding domain"/>
    <property type="match status" value="1"/>
</dbReference>
<accession>A1BIQ7</accession>
<comment type="function">
    <text evidence="1">Involved in protein export. Acts as a chaperone by maintaining the newly synthesized protein in an open conformation. Functions as a peptidyl-prolyl cis-trans isomerase.</text>
</comment>
<comment type="catalytic activity">
    <reaction evidence="1">
        <text>[protein]-peptidylproline (omega=180) = [protein]-peptidylproline (omega=0)</text>
        <dbReference type="Rhea" id="RHEA:16237"/>
        <dbReference type="Rhea" id="RHEA-COMP:10747"/>
        <dbReference type="Rhea" id="RHEA-COMP:10748"/>
        <dbReference type="ChEBI" id="CHEBI:83833"/>
        <dbReference type="ChEBI" id="CHEBI:83834"/>
        <dbReference type="EC" id="5.2.1.8"/>
    </reaction>
</comment>
<comment type="subcellular location">
    <subcellularLocation>
        <location>Cytoplasm</location>
    </subcellularLocation>
    <text evidence="1">About half TF is bound to the ribosome near the polypeptide exit tunnel while the other half is free in the cytoplasm.</text>
</comment>
<comment type="domain">
    <text evidence="1">Consists of 3 domains; the N-terminus binds the ribosome, the middle domain has PPIase activity, while the C-terminus has intrinsic chaperone activity on its own.</text>
</comment>
<comment type="similarity">
    <text evidence="1">Belongs to the FKBP-type PPIase family. Tig subfamily.</text>
</comment>
<gene>
    <name evidence="1" type="primary">tig</name>
    <name type="ordered locus">Cpha266_2292</name>
</gene>
<reference key="1">
    <citation type="submission" date="2006-12" db="EMBL/GenBank/DDBJ databases">
        <title>Complete sequence of Chlorobium phaeobacteroides DSM 266.</title>
        <authorList>
            <consortium name="US DOE Joint Genome Institute"/>
            <person name="Copeland A."/>
            <person name="Lucas S."/>
            <person name="Lapidus A."/>
            <person name="Barry K."/>
            <person name="Detter J.C."/>
            <person name="Glavina del Rio T."/>
            <person name="Hammon N."/>
            <person name="Israni S."/>
            <person name="Pitluck S."/>
            <person name="Goltsman E."/>
            <person name="Schmutz J."/>
            <person name="Larimer F."/>
            <person name="Land M."/>
            <person name="Hauser L."/>
            <person name="Mikhailova N."/>
            <person name="Li T."/>
            <person name="Overmann J."/>
            <person name="Bryant D.A."/>
            <person name="Richardson P."/>
        </authorList>
    </citation>
    <scope>NUCLEOTIDE SEQUENCE [LARGE SCALE GENOMIC DNA]</scope>
    <source>
        <strain>DSM 266 / SMG 266 / 2430</strain>
    </source>
</reference>
<feature type="chain" id="PRO_1000022665" description="Trigger factor">
    <location>
        <begin position="1"/>
        <end position="427"/>
    </location>
</feature>
<feature type="domain" description="PPIase FKBP-type" evidence="1">
    <location>
        <begin position="160"/>
        <end position="240"/>
    </location>
</feature>
<keyword id="KW-0131">Cell cycle</keyword>
<keyword id="KW-0132">Cell division</keyword>
<keyword id="KW-0143">Chaperone</keyword>
<keyword id="KW-0963">Cytoplasm</keyword>
<keyword id="KW-0413">Isomerase</keyword>
<keyword id="KW-1185">Reference proteome</keyword>
<keyword id="KW-0697">Rotamase</keyword>
<organism>
    <name type="scientific">Chlorobium phaeobacteroides (strain DSM 266 / SMG 266 / 2430)</name>
    <dbReference type="NCBI Taxonomy" id="290317"/>
    <lineage>
        <taxon>Bacteria</taxon>
        <taxon>Pseudomonadati</taxon>
        <taxon>Chlorobiota</taxon>
        <taxon>Chlorobiia</taxon>
        <taxon>Chlorobiales</taxon>
        <taxon>Chlorobiaceae</taxon>
        <taxon>Chlorobium/Pelodictyon group</taxon>
        <taxon>Chlorobium</taxon>
    </lineage>
</organism>
<proteinExistence type="inferred from homology"/>